<organism>
    <name type="scientific">Crucihimalaya wallichii</name>
    <name type="common">Rock-cress</name>
    <name type="synonym">Arabidopsis campestris</name>
    <dbReference type="NCBI Taxonomy" id="78192"/>
    <lineage>
        <taxon>Eukaryota</taxon>
        <taxon>Viridiplantae</taxon>
        <taxon>Streptophyta</taxon>
        <taxon>Embryophyta</taxon>
        <taxon>Tracheophyta</taxon>
        <taxon>Spermatophyta</taxon>
        <taxon>Magnoliopsida</taxon>
        <taxon>eudicotyledons</taxon>
        <taxon>Gunneridae</taxon>
        <taxon>Pentapetalae</taxon>
        <taxon>rosids</taxon>
        <taxon>malvids</taxon>
        <taxon>Brassicales</taxon>
        <taxon>Brassicaceae</taxon>
        <taxon>Crucihimalayeae</taxon>
        <taxon>Crucihimalaya</taxon>
    </lineage>
</organism>
<accession>A4QKY2</accession>
<comment type="subcellular location">
    <subcellularLocation>
        <location>Plastid</location>
        <location>Chloroplast</location>
    </subcellularLocation>
</comment>
<comment type="similarity">
    <text evidence="1">Belongs to the bacterial ribosomal protein bL32 family.</text>
</comment>
<reference key="1">
    <citation type="submission" date="2007-03" db="EMBL/GenBank/DDBJ databases">
        <title>Sequencing analysis of Crucihimalaya wallichii chloroplast DNA.</title>
        <authorList>
            <person name="Hosouchi T."/>
            <person name="Tsuruoka H."/>
            <person name="Kotani H."/>
        </authorList>
    </citation>
    <scope>NUCLEOTIDE SEQUENCE [LARGE SCALE GENOMIC DNA]</scope>
</reference>
<sequence length="52" mass="6047">MAVPKKRTSISKKRIRKNIWKRKGYWTSLKAFSLGKSLSTGNSKSFFVQQNK</sequence>
<protein>
    <recommendedName>
        <fullName evidence="1">Large ribosomal subunit protein bL32c</fullName>
    </recommendedName>
    <alternativeName>
        <fullName evidence="2">50S ribosomal protein L32, chloroplastic</fullName>
    </alternativeName>
</protein>
<feature type="chain" id="PRO_0000296611" description="Large ribosomal subunit protein bL32c">
    <location>
        <begin position="1"/>
        <end position="52"/>
    </location>
</feature>
<keyword id="KW-0150">Chloroplast</keyword>
<keyword id="KW-0934">Plastid</keyword>
<keyword id="KW-0687">Ribonucleoprotein</keyword>
<keyword id="KW-0689">Ribosomal protein</keyword>
<geneLocation type="chloroplast"/>
<gene>
    <name evidence="1" type="primary">rpl32</name>
</gene>
<name>RK32_CRUWA</name>
<dbReference type="EMBL" id="AP009372">
    <property type="protein sequence ID" value="BAF50337.1"/>
    <property type="molecule type" value="Genomic_DNA"/>
</dbReference>
<dbReference type="RefSeq" id="YP_001123512.1">
    <property type="nucleotide sequence ID" value="NC_009271.1"/>
</dbReference>
<dbReference type="SMR" id="A4QKY2"/>
<dbReference type="GeneID" id="4962717"/>
<dbReference type="GO" id="GO:0009507">
    <property type="term" value="C:chloroplast"/>
    <property type="evidence" value="ECO:0007669"/>
    <property type="project" value="UniProtKB-SubCell"/>
</dbReference>
<dbReference type="GO" id="GO:0015934">
    <property type="term" value="C:large ribosomal subunit"/>
    <property type="evidence" value="ECO:0007669"/>
    <property type="project" value="InterPro"/>
</dbReference>
<dbReference type="GO" id="GO:0003735">
    <property type="term" value="F:structural constituent of ribosome"/>
    <property type="evidence" value="ECO:0007669"/>
    <property type="project" value="InterPro"/>
</dbReference>
<dbReference type="GO" id="GO:0006412">
    <property type="term" value="P:translation"/>
    <property type="evidence" value="ECO:0007669"/>
    <property type="project" value="UniProtKB-UniRule"/>
</dbReference>
<dbReference type="HAMAP" id="MF_00340">
    <property type="entry name" value="Ribosomal_bL32"/>
    <property type="match status" value="1"/>
</dbReference>
<dbReference type="InterPro" id="IPR002677">
    <property type="entry name" value="Ribosomal_bL32"/>
</dbReference>
<dbReference type="InterPro" id="IPR044958">
    <property type="entry name" value="Ribosomal_bL32_plant/cyanobact"/>
</dbReference>
<dbReference type="InterPro" id="IPR011332">
    <property type="entry name" value="Ribosomal_zn-bd"/>
</dbReference>
<dbReference type="PANTHER" id="PTHR36083">
    <property type="entry name" value="50S RIBOSOMAL PROTEIN L32, CHLOROPLASTIC"/>
    <property type="match status" value="1"/>
</dbReference>
<dbReference type="PANTHER" id="PTHR36083:SF1">
    <property type="entry name" value="LARGE RIBOSOMAL SUBUNIT PROTEIN BL32C"/>
    <property type="match status" value="1"/>
</dbReference>
<dbReference type="Pfam" id="PF01783">
    <property type="entry name" value="Ribosomal_L32p"/>
    <property type="match status" value="1"/>
</dbReference>
<dbReference type="SUPFAM" id="SSF57829">
    <property type="entry name" value="Zn-binding ribosomal proteins"/>
    <property type="match status" value="1"/>
</dbReference>
<proteinExistence type="inferred from homology"/>
<evidence type="ECO:0000255" key="1">
    <source>
        <dbReference type="HAMAP-Rule" id="MF_00340"/>
    </source>
</evidence>
<evidence type="ECO:0000305" key="2"/>